<organism>
    <name type="scientific">Schizosaccharomyces pombe (strain 972 / ATCC 24843)</name>
    <name type="common">Fission yeast</name>
    <dbReference type="NCBI Taxonomy" id="284812"/>
    <lineage>
        <taxon>Eukaryota</taxon>
        <taxon>Fungi</taxon>
        <taxon>Dikarya</taxon>
        <taxon>Ascomycota</taxon>
        <taxon>Taphrinomycotina</taxon>
        <taxon>Schizosaccharomycetes</taxon>
        <taxon>Schizosaccharomycetales</taxon>
        <taxon>Schizosaccharomycetaceae</taxon>
        <taxon>Schizosaccharomyces</taxon>
    </lineage>
</organism>
<protein>
    <recommendedName>
        <fullName evidence="5">Ferric reductase transmembrane component 1</fullName>
        <ecNumber evidence="1">1.16.1.9</ecNumber>
    </recommendedName>
    <alternativeName>
        <fullName evidence="5">Ferric-chelate reductase 1</fullName>
    </alternativeName>
</protein>
<name>FRP1_SCHPO</name>
<reference key="1">
    <citation type="journal article" date="1993" name="Mol. Cell. Biol.">
        <title>The fission yeast ferric reductase gene frp1+ is required for ferric iron uptake and encodes a protein that is homologous to the gp91-phox subunit of the human NADPH phagocyte oxidoreductase.</title>
        <authorList>
            <person name="Roman D.G."/>
            <person name="Dancis A."/>
            <person name="Anderson G.J."/>
            <person name="Klausner R.D."/>
        </authorList>
    </citation>
    <scope>NUCLEOTIDE SEQUENCE [GENOMIC DNA]</scope>
</reference>
<reference key="2">
    <citation type="journal article" date="2002" name="Nature">
        <title>The genome sequence of Schizosaccharomyces pombe.</title>
        <authorList>
            <person name="Wood V."/>
            <person name="Gwilliam R."/>
            <person name="Rajandream M.A."/>
            <person name="Lyne M.H."/>
            <person name="Lyne R."/>
            <person name="Stewart A."/>
            <person name="Sgouros J.G."/>
            <person name="Peat N."/>
            <person name="Hayles J."/>
            <person name="Baker S.G."/>
            <person name="Basham D."/>
            <person name="Bowman S."/>
            <person name="Brooks K."/>
            <person name="Brown D."/>
            <person name="Brown S."/>
            <person name="Chillingworth T."/>
            <person name="Churcher C.M."/>
            <person name="Collins M."/>
            <person name="Connor R."/>
            <person name="Cronin A."/>
            <person name="Davis P."/>
            <person name="Feltwell T."/>
            <person name="Fraser A."/>
            <person name="Gentles S."/>
            <person name="Goble A."/>
            <person name="Hamlin N."/>
            <person name="Harris D.E."/>
            <person name="Hidalgo J."/>
            <person name="Hodgson G."/>
            <person name="Holroyd S."/>
            <person name="Hornsby T."/>
            <person name="Howarth S."/>
            <person name="Huckle E.J."/>
            <person name="Hunt S."/>
            <person name="Jagels K."/>
            <person name="James K.D."/>
            <person name="Jones L."/>
            <person name="Jones M."/>
            <person name="Leather S."/>
            <person name="McDonald S."/>
            <person name="McLean J."/>
            <person name="Mooney P."/>
            <person name="Moule S."/>
            <person name="Mungall K.L."/>
            <person name="Murphy L.D."/>
            <person name="Niblett D."/>
            <person name="Odell C."/>
            <person name="Oliver K."/>
            <person name="O'Neil S."/>
            <person name="Pearson D."/>
            <person name="Quail M.A."/>
            <person name="Rabbinowitsch E."/>
            <person name="Rutherford K.M."/>
            <person name="Rutter S."/>
            <person name="Saunders D."/>
            <person name="Seeger K."/>
            <person name="Sharp S."/>
            <person name="Skelton J."/>
            <person name="Simmonds M.N."/>
            <person name="Squares R."/>
            <person name="Squares S."/>
            <person name="Stevens K."/>
            <person name="Taylor K."/>
            <person name="Taylor R.G."/>
            <person name="Tivey A."/>
            <person name="Walsh S.V."/>
            <person name="Warren T."/>
            <person name="Whitehead S."/>
            <person name="Woodward J.R."/>
            <person name="Volckaert G."/>
            <person name="Aert R."/>
            <person name="Robben J."/>
            <person name="Grymonprez B."/>
            <person name="Weltjens I."/>
            <person name="Vanstreels E."/>
            <person name="Rieger M."/>
            <person name="Schaefer M."/>
            <person name="Mueller-Auer S."/>
            <person name="Gabel C."/>
            <person name="Fuchs M."/>
            <person name="Duesterhoeft A."/>
            <person name="Fritzc C."/>
            <person name="Holzer E."/>
            <person name="Moestl D."/>
            <person name="Hilbert H."/>
            <person name="Borzym K."/>
            <person name="Langer I."/>
            <person name="Beck A."/>
            <person name="Lehrach H."/>
            <person name="Reinhardt R."/>
            <person name="Pohl T.M."/>
            <person name="Eger P."/>
            <person name="Zimmermann W."/>
            <person name="Wedler H."/>
            <person name="Wambutt R."/>
            <person name="Purnelle B."/>
            <person name="Goffeau A."/>
            <person name="Cadieu E."/>
            <person name="Dreano S."/>
            <person name="Gloux S."/>
            <person name="Lelaure V."/>
            <person name="Mottier S."/>
            <person name="Galibert F."/>
            <person name="Aves S.J."/>
            <person name="Xiang Z."/>
            <person name="Hunt C."/>
            <person name="Moore K."/>
            <person name="Hurst S.M."/>
            <person name="Lucas M."/>
            <person name="Rochet M."/>
            <person name="Gaillardin C."/>
            <person name="Tallada V.A."/>
            <person name="Garzon A."/>
            <person name="Thode G."/>
            <person name="Daga R.R."/>
            <person name="Cruzado L."/>
            <person name="Jimenez J."/>
            <person name="Sanchez M."/>
            <person name="del Rey F."/>
            <person name="Benito J."/>
            <person name="Dominguez A."/>
            <person name="Revuelta J.L."/>
            <person name="Moreno S."/>
            <person name="Armstrong J."/>
            <person name="Forsburg S.L."/>
            <person name="Cerutti L."/>
            <person name="Lowe T."/>
            <person name="McCombie W.R."/>
            <person name="Paulsen I."/>
            <person name="Potashkin J."/>
            <person name="Shpakovski G.V."/>
            <person name="Ussery D."/>
            <person name="Barrell B.G."/>
            <person name="Nurse P."/>
        </authorList>
    </citation>
    <scope>NUCLEOTIDE SEQUENCE [LARGE SCALE GENOMIC DNA]</scope>
    <source>
        <strain>972 / ATCC 24843</strain>
    </source>
</reference>
<reference key="3">
    <citation type="journal article" date="2008" name="J. Proteome Res.">
        <title>Phosphoproteome analysis of fission yeast.</title>
        <authorList>
            <person name="Wilson-Grady J.T."/>
            <person name="Villen J."/>
            <person name="Gygi S.P."/>
        </authorList>
    </citation>
    <scope>PHOSPHORYLATION [LARGE SCALE ANALYSIS] AT SER-362; SER-381 AND SER-383</scope>
    <scope>IDENTIFICATION BY MASS SPECTROMETRY</scope>
</reference>
<evidence type="ECO:0000250" key="1">
    <source>
        <dbReference type="UniProtKB" id="P32791"/>
    </source>
</evidence>
<evidence type="ECO:0000255" key="2"/>
<evidence type="ECO:0000255" key="3">
    <source>
        <dbReference type="PROSITE-ProRule" id="PRU00716"/>
    </source>
</evidence>
<evidence type="ECO:0000269" key="4">
    <source>
    </source>
</evidence>
<evidence type="ECO:0000305" key="5"/>
<sequence length="564" mass="64092">MAINSSDKWTVIAICLILGILLAFILMFWLERFRVIIKSNAHKHDPSDKRQIWLEKYYLFVRQIYTYLVTHKVILTLIAVPVVFAISIPFIGMQTPASSHGKQTTQVSTGNWSKNAVAARLGFLACGLYVTSYFFSIKNNPFALLLISSHEKMNYVHRRLSQYAIMIGAIHGFAYIGLAAQGKRALLTARVTIIGYVILGLMVIMIVSSLPFFRRRFYEWFFVLHHMCSIGFLITIWLHHRRCVVYMKVCVAVYVFDRGCRMLRSFLNRSKFDVVLVEDDLIYMKGPRPKKSFFGLPWGAGNHMYINIPSLSYWQIHPFTIASVPSDDFIELFVAVRAGFTKRLAKKVSSKSLSDVSDINISDEKIEKNGDVGIEVMERHSLSQEDLVFESSAAKVSVLMDGPYGPVSNPYKDYSYLFLFAGGVGVSYILPIILDTIKKQSRTVHITFVWSARSSALLNIVHKSLCEAVRYTEMNINIFCHLTNSYPVEEVSSLNSQSARNYSLQYLNGRPDVNDYFKDFLHATGTQTAALASCGSDKLLRHLKSCVNTHSPSTVDLYQHYEEI</sequence>
<gene>
    <name type="primary">frp1</name>
    <name type="ORF">SPBC1683.09c</name>
</gene>
<feature type="chain" id="PRO_0000210152" description="Ferric reductase transmembrane component 1">
    <location>
        <begin position="1"/>
        <end position="564"/>
    </location>
</feature>
<feature type="transmembrane region" description="Helical" evidence="2">
    <location>
        <begin position="10"/>
        <end position="30"/>
    </location>
</feature>
<feature type="transmembrane region" description="Helical" evidence="2">
    <location>
        <begin position="73"/>
        <end position="93"/>
    </location>
</feature>
<feature type="transmembrane region" description="Helical" evidence="2">
    <location>
        <begin position="117"/>
        <end position="137"/>
    </location>
</feature>
<feature type="transmembrane region" description="Helical" evidence="2">
    <location>
        <begin position="160"/>
        <end position="180"/>
    </location>
</feature>
<feature type="transmembrane region" description="Helical" evidence="2">
    <location>
        <begin position="193"/>
        <end position="213"/>
    </location>
</feature>
<feature type="transmembrane region" description="Helical" evidence="2">
    <location>
        <begin position="417"/>
        <end position="437"/>
    </location>
</feature>
<feature type="domain" description="Ferric oxidoreductase" evidence="2">
    <location>
        <begin position="121"/>
        <end position="254"/>
    </location>
</feature>
<feature type="domain" description="FAD-binding FR-type" evidence="3">
    <location>
        <begin position="255"/>
        <end position="410"/>
    </location>
</feature>
<feature type="binding site" description="axial binding residue" evidence="1">
    <location>
        <position position="157"/>
    </location>
    <ligand>
        <name>heme</name>
        <dbReference type="ChEBI" id="CHEBI:30413"/>
        <label>1</label>
    </ligand>
    <ligandPart>
        <name>Fe</name>
        <dbReference type="ChEBI" id="CHEBI:18248"/>
    </ligandPart>
</feature>
<feature type="binding site" description="axial binding residue" evidence="1">
    <location>
        <position position="171"/>
    </location>
    <ligand>
        <name>heme</name>
        <dbReference type="ChEBI" id="CHEBI:30413"/>
        <label>2</label>
    </ligand>
    <ligandPart>
        <name>Fe</name>
        <dbReference type="ChEBI" id="CHEBI:18248"/>
    </ligandPart>
</feature>
<feature type="binding site" description="axial binding residue" evidence="1">
    <location>
        <position position="225"/>
    </location>
    <ligand>
        <name>heme</name>
        <dbReference type="ChEBI" id="CHEBI:30413"/>
        <label>1</label>
    </ligand>
    <ligandPart>
        <name>Fe</name>
        <dbReference type="ChEBI" id="CHEBI:18248"/>
    </ligandPart>
</feature>
<feature type="binding site" description="axial binding residue" evidence="1">
    <location>
        <position position="239"/>
    </location>
    <ligand>
        <name>heme</name>
        <dbReference type="ChEBI" id="CHEBI:30413"/>
        <label>2</label>
    </ligand>
    <ligandPart>
        <name>Fe</name>
        <dbReference type="ChEBI" id="CHEBI:18248"/>
    </ligandPart>
</feature>
<feature type="binding site" evidence="2">
    <location>
        <begin position="317"/>
        <end position="323"/>
    </location>
    <ligand>
        <name>FAD</name>
        <dbReference type="ChEBI" id="CHEBI:57692"/>
    </ligand>
</feature>
<feature type="binding site" evidence="2">
    <location>
        <begin position="419"/>
        <end position="427"/>
    </location>
    <ligand>
        <name>NAD(+)</name>
        <dbReference type="ChEBI" id="CHEBI:57540"/>
    </ligand>
</feature>
<feature type="modified residue" description="Phosphoserine" evidence="4">
    <location>
        <position position="362"/>
    </location>
</feature>
<feature type="modified residue" description="Phosphoserine" evidence="4">
    <location>
        <position position="381"/>
    </location>
</feature>
<feature type="modified residue" description="Phosphoserine" evidence="4">
    <location>
        <position position="383"/>
    </location>
</feature>
<feature type="glycosylation site" description="N-linked (GlcNAc...) asparagine" evidence="2">
    <location>
        <position position="4"/>
    </location>
</feature>
<feature type="glycosylation site" description="N-linked (GlcNAc...) asparagine" evidence="2">
    <location>
        <position position="111"/>
    </location>
</feature>
<feature type="glycosylation site" description="N-linked (GlcNAc...) asparagine" evidence="2">
    <location>
        <position position="268"/>
    </location>
</feature>
<feature type="glycosylation site" description="N-linked (GlcNAc...) asparagine" evidence="2">
    <location>
        <position position="360"/>
    </location>
</feature>
<feature type="glycosylation site" description="N-linked (GlcNAc...) asparagine" evidence="2">
    <location>
        <position position="501"/>
    </location>
</feature>
<proteinExistence type="evidence at protein level"/>
<dbReference type="EC" id="1.16.1.9" evidence="1"/>
<dbReference type="EMBL" id="L07749">
    <property type="protein sequence ID" value="AAA68045.1"/>
    <property type="molecule type" value="Genomic_DNA"/>
</dbReference>
<dbReference type="EMBL" id="CU329671">
    <property type="protein sequence ID" value="CAB91171.1"/>
    <property type="molecule type" value="Genomic_DNA"/>
</dbReference>
<dbReference type="PIR" id="A48141">
    <property type="entry name" value="A48141"/>
</dbReference>
<dbReference type="RefSeq" id="NP_595065.1">
    <property type="nucleotide sequence ID" value="NM_001020971.2"/>
</dbReference>
<dbReference type="SMR" id="Q04800"/>
<dbReference type="BioGRID" id="276264">
    <property type="interactions" value="23"/>
</dbReference>
<dbReference type="FunCoup" id="Q04800">
    <property type="interactions" value="225"/>
</dbReference>
<dbReference type="STRING" id="284812.Q04800"/>
<dbReference type="TCDB" id="5.B.1.5.5">
    <property type="family name" value="the phagocyte (gp91(phox)) nadph oxidase family"/>
</dbReference>
<dbReference type="GlyCosmos" id="Q04800">
    <property type="glycosylation" value="5 sites, No reported glycans"/>
</dbReference>
<dbReference type="iPTMnet" id="Q04800"/>
<dbReference type="PaxDb" id="4896-SPBC1683.09c.1"/>
<dbReference type="EnsemblFungi" id="SPBC1683.09c.1">
    <property type="protein sequence ID" value="SPBC1683.09c.1:pep"/>
    <property type="gene ID" value="SPBC1683.09c"/>
</dbReference>
<dbReference type="GeneID" id="2539711"/>
<dbReference type="KEGG" id="spo:2539711"/>
<dbReference type="PomBase" id="SPBC1683.09c">
    <property type="gene designation" value="frp1"/>
</dbReference>
<dbReference type="VEuPathDB" id="FungiDB:SPBC1683.09c"/>
<dbReference type="eggNOG" id="KOG0039">
    <property type="taxonomic scope" value="Eukaryota"/>
</dbReference>
<dbReference type="HOGENOM" id="CLU_035348_0_0_1"/>
<dbReference type="InParanoid" id="Q04800"/>
<dbReference type="OMA" id="YWKELVF"/>
<dbReference type="PhylomeDB" id="Q04800"/>
<dbReference type="PRO" id="PR:Q04800"/>
<dbReference type="Proteomes" id="UP000002485">
    <property type="component" value="Chromosome II"/>
</dbReference>
<dbReference type="GO" id="GO:0005886">
    <property type="term" value="C:plasma membrane"/>
    <property type="evidence" value="ECO:0000318"/>
    <property type="project" value="GO_Central"/>
</dbReference>
<dbReference type="GO" id="GO:0052851">
    <property type="term" value="F:ferric-chelate reductase (NADPH) activity"/>
    <property type="evidence" value="ECO:0000315"/>
    <property type="project" value="PomBase"/>
</dbReference>
<dbReference type="GO" id="GO:0000293">
    <property type="term" value="F:ferric-chelate reductase activity"/>
    <property type="evidence" value="ECO:0000318"/>
    <property type="project" value="GO_Central"/>
</dbReference>
<dbReference type="GO" id="GO:0050660">
    <property type="term" value="F:flavin adenine dinucleotide binding"/>
    <property type="evidence" value="ECO:0000255"/>
    <property type="project" value="PomBase"/>
</dbReference>
<dbReference type="GO" id="GO:0005506">
    <property type="term" value="F:iron ion binding"/>
    <property type="evidence" value="ECO:0000255"/>
    <property type="project" value="PomBase"/>
</dbReference>
<dbReference type="GO" id="GO:0010106">
    <property type="term" value="P:cellular response to iron ion starvation"/>
    <property type="evidence" value="ECO:0000315"/>
    <property type="project" value="PomBase"/>
</dbReference>
<dbReference type="GO" id="GO:0035434">
    <property type="term" value="P:copper ion transmembrane transport"/>
    <property type="evidence" value="ECO:0000266"/>
    <property type="project" value="PomBase"/>
</dbReference>
<dbReference type="GO" id="GO:0033215">
    <property type="term" value="P:reductive iron assimilation"/>
    <property type="evidence" value="ECO:0000315"/>
    <property type="project" value="PomBase"/>
</dbReference>
<dbReference type="CDD" id="cd06186">
    <property type="entry name" value="NOX_Duox_like_FAD_NADP"/>
    <property type="match status" value="1"/>
</dbReference>
<dbReference type="FunFam" id="3.40.50.80:FF:000074">
    <property type="entry name" value="Plasma membrane ferric-chelate reductase (Fre2), putative"/>
    <property type="match status" value="1"/>
</dbReference>
<dbReference type="Gene3D" id="3.40.50.80">
    <property type="entry name" value="Nucleotide-binding domain of ferredoxin-NADP reductase (FNR) module"/>
    <property type="match status" value="1"/>
</dbReference>
<dbReference type="InterPro" id="IPR013112">
    <property type="entry name" value="FAD-bd_8"/>
</dbReference>
<dbReference type="InterPro" id="IPR017927">
    <property type="entry name" value="FAD-bd_FR_type"/>
</dbReference>
<dbReference type="InterPro" id="IPR013130">
    <property type="entry name" value="Fe3_Rdtase_TM_dom"/>
</dbReference>
<dbReference type="InterPro" id="IPR013121">
    <property type="entry name" value="Fe_red_NAD-bd_6"/>
</dbReference>
<dbReference type="InterPro" id="IPR051410">
    <property type="entry name" value="Ferric/Cupric_Reductase"/>
</dbReference>
<dbReference type="InterPro" id="IPR039261">
    <property type="entry name" value="FNR_nucleotide-bd"/>
</dbReference>
<dbReference type="InterPro" id="IPR017938">
    <property type="entry name" value="Riboflavin_synthase-like_b-brl"/>
</dbReference>
<dbReference type="PANTHER" id="PTHR32361">
    <property type="entry name" value="FERRIC/CUPRIC REDUCTASE TRANSMEMBRANE COMPONENT"/>
    <property type="match status" value="1"/>
</dbReference>
<dbReference type="PANTHER" id="PTHR32361:SF28">
    <property type="entry name" value="FRP1P"/>
    <property type="match status" value="1"/>
</dbReference>
<dbReference type="Pfam" id="PF08022">
    <property type="entry name" value="FAD_binding_8"/>
    <property type="match status" value="1"/>
</dbReference>
<dbReference type="Pfam" id="PF01794">
    <property type="entry name" value="Ferric_reduct"/>
    <property type="match status" value="1"/>
</dbReference>
<dbReference type="Pfam" id="PF08030">
    <property type="entry name" value="NAD_binding_6"/>
    <property type="match status" value="1"/>
</dbReference>
<dbReference type="SFLD" id="SFLDS00052">
    <property type="entry name" value="Ferric_Reductase_Domain"/>
    <property type="match status" value="1"/>
</dbReference>
<dbReference type="SFLD" id="SFLDG01168">
    <property type="entry name" value="Ferric_reductase_subgroup_(FRE"/>
    <property type="match status" value="1"/>
</dbReference>
<dbReference type="SUPFAM" id="SSF52343">
    <property type="entry name" value="Ferredoxin reductase-like, C-terminal NADP-linked domain"/>
    <property type="match status" value="1"/>
</dbReference>
<dbReference type="SUPFAM" id="SSF63380">
    <property type="entry name" value="Riboflavin synthase domain-like"/>
    <property type="match status" value="1"/>
</dbReference>
<dbReference type="PROSITE" id="PS51384">
    <property type="entry name" value="FAD_FR"/>
    <property type="match status" value="1"/>
</dbReference>
<accession>Q04800</accession>
<comment type="function">
    <text evidence="1">Metalloreductase responsible for reducing extracellular iron and copper prior to import (By similarity). Catalyzes the reductive uptake of Fe(3+)-salts and Fe(3+) bound to catecholate or hydroxamate siderophores (By similarity). Fe(3+) is reduced to Fe(2+), which then dissociates from the siderophore and can be imported by the high-affinity Fe(2+) transport complex in the plasma membrane (By similarity). Also participates in Cu(2+) reduction and Cu(+) uptake (By similarity).</text>
</comment>
<comment type="catalytic activity">
    <reaction evidence="1">
        <text>2 a Fe(II)-siderophore + NADP(+) + H(+) = 2 a Fe(III)-siderophore + NADPH</text>
        <dbReference type="Rhea" id="RHEA:28795"/>
        <dbReference type="Rhea" id="RHEA-COMP:11342"/>
        <dbReference type="Rhea" id="RHEA-COMP:11344"/>
        <dbReference type="ChEBI" id="CHEBI:15378"/>
        <dbReference type="ChEBI" id="CHEBI:29033"/>
        <dbReference type="ChEBI" id="CHEBI:29034"/>
        <dbReference type="ChEBI" id="CHEBI:57783"/>
        <dbReference type="ChEBI" id="CHEBI:58349"/>
        <dbReference type="EC" id="1.16.1.9"/>
    </reaction>
</comment>
<comment type="cofactor">
    <cofactor evidence="1">
        <name>FAD</name>
        <dbReference type="ChEBI" id="CHEBI:57692"/>
    </cofactor>
</comment>
<comment type="cofactor">
    <cofactor evidence="1">
        <name>heme</name>
        <dbReference type="ChEBI" id="CHEBI:30413"/>
    </cofactor>
</comment>
<comment type="subcellular location">
    <subcellularLocation>
        <location evidence="1">Cell membrane</location>
        <topology evidence="2">Multi-pass membrane protein</topology>
    </subcellularLocation>
</comment>
<comment type="similarity">
    <text evidence="5">Belongs to the ferric reductase (FRE) family.</text>
</comment>
<keyword id="KW-1003">Cell membrane</keyword>
<keyword id="KW-0249">Electron transport</keyword>
<keyword id="KW-0274">FAD</keyword>
<keyword id="KW-0285">Flavoprotein</keyword>
<keyword id="KW-0325">Glycoprotein</keyword>
<keyword id="KW-0349">Heme</keyword>
<keyword id="KW-0406">Ion transport</keyword>
<keyword id="KW-0408">Iron</keyword>
<keyword id="KW-0410">Iron transport</keyword>
<keyword id="KW-0472">Membrane</keyword>
<keyword id="KW-0479">Metal-binding</keyword>
<keyword id="KW-0521">NADP</keyword>
<keyword id="KW-0560">Oxidoreductase</keyword>
<keyword id="KW-0597">Phosphoprotein</keyword>
<keyword id="KW-1185">Reference proteome</keyword>
<keyword id="KW-0812">Transmembrane</keyword>
<keyword id="KW-1133">Transmembrane helix</keyword>
<keyword id="KW-0813">Transport</keyword>